<evidence type="ECO:0000255" key="1">
    <source>
        <dbReference type="HAMAP-Rule" id="MF_00169"/>
    </source>
</evidence>
<reference key="1">
    <citation type="journal article" date="2007" name="Environ. Microbiol.">
        <title>Whole-genome analysis of the ammonia-oxidizing bacterium, Nitrosomonas eutropha C91: implications for niche adaptation.</title>
        <authorList>
            <person name="Stein L.Y."/>
            <person name="Arp D.J."/>
            <person name="Berube P.M."/>
            <person name="Chain P.S."/>
            <person name="Hauser L."/>
            <person name="Jetten M.S."/>
            <person name="Klotz M.G."/>
            <person name="Larimer F.W."/>
            <person name="Norton J.M."/>
            <person name="Op den Camp H.J.M."/>
            <person name="Shin M."/>
            <person name="Wei X."/>
        </authorList>
    </citation>
    <scope>NUCLEOTIDE SEQUENCE [LARGE SCALE GENOMIC DNA]</scope>
    <source>
        <strain>DSM 101675 / C91 / Nm57</strain>
    </source>
</reference>
<name>AROQ_NITEC</name>
<keyword id="KW-0028">Amino-acid biosynthesis</keyword>
<keyword id="KW-0057">Aromatic amino acid biosynthesis</keyword>
<keyword id="KW-0456">Lyase</keyword>
<comment type="function">
    <text evidence="1">Catalyzes a trans-dehydration via an enolate intermediate.</text>
</comment>
<comment type="catalytic activity">
    <reaction evidence="1">
        <text>3-dehydroquinate = 3-dehydroshikimate + H2O</text>
        <dbReference type="Rhea" id="RHEA:21096"/>
        <dbReference type="ChEBI" id="CHEBI:15377"/>
        <dbReference type="ChEBI" id="CHEBI:16630"/>
        <dbReference type="ChEBI" id="CHEBI:32364"/>
        <dbReference type="EC" id="4.2.1.10"/>
    </reaction>
</comment>
<comment type="pathway">
    <text evidence="1">Metabolic intermediate biosynthesis; chorismate biosynthesis; chorismate from D-erythrose 4-phosphate and phosphoenolpyruvate: step 3/7.</text>
</comment>
<comment type="subunit">
    <text evidence="1">Homododecamer.</text>
</comment>
<comment type="similarity">
    <text evidence="1">Belongs to the type-II 3-dehydroquinase family.</text>
</comment>
<protein>
    <recommendedName>
        <fullName evidence="1">3-dehydroquinate dehydratase</fullName>
        <shortName evidence="1">3-dehydroquinase</shortName>
        <ecNumber evidence="1">4.2.1.10</ecNumber>
    </recommendedName>
    <alternativeName>
        <fullName evidence="1">Type II DHQase</fullName>
    </alternativeName>
</protein>
<sequence length="145" mass="15775">MVAKILVVHGPNLNLLGRREPSIYGHTTLEDINRNLVAKAQAASVVLDTFQSNAEHELIDRVQEAMNDGTGFIIINPAALTHTSIALRDALAATNLPFVEIHLSNIYAREHFRHTSYFSDIAVGVISGLGAAGYELALQFALARQ</sequence>
<accession>Q0AEU9</accession>
<gene>
    <name evidence="1" type="primary">aroQ</name>
    <name type="ordered locus">Neut_1901</name>
</gene>
<feature type="chain" id="PRO_1000023489" description="3-dehydroquinate dehydratase">
    <location>
        <begin position="1"/>
        <end position="145"/>
    </location>
</feature>
<feature type="active site" description="Proton acceptor" evidence="1">
    <location>
        <position position="24"/>
    </location>
</feature>
<feature type="active site" description="Proton donor" evidence="1">
    <location>
        <position position="102"/>
    </location>
</feature>
<feature type="binding site" evidence="1">
    <location>
        <position position="76"/>
    </location>
    <ligand>
        <name>substrate</name>
    </ligand>
</feature>
<feature type="binding site" evidence="1">
    <location>
        <position position="82"/>
    </location>
    <ligand>
        <name>substrate</name>
    </ligand>
</feature>
<feature type="binding site" evidence="1">
    <location>
        <position position="89"/>
    </location>
    <ligand>
        <name>substrate</name>
    </ligand>
</feature>
<feature type="binding site" evidence="1">
    <location>
        <begin position="103"/>
        <end position="104"/>
    </location>
    <ligand>
        <name>substrate</name>
    </ligand>
</feature>
<feature type="binding site" evidence="1">
    <location>
        <position position="113"/>
    </location>
    <ligand>
        <name>substrate</name>
    </ligand>
</feature>
<feature type="site" description="Transition state stabilizer" evidence="1">
    <location>
        <position position="19"/>
    </location>
</feature>
<proteinExistence type="inferred from homology"/>
<dbReference type="EC" id="4.2.1.10" evidence="1"/>
<dbReference type="EMBL" id="CP000450">
    <property type="protein sequence ID" value="ABI60133.1"/>
    <property type="molecule type" value="Genomic_DNA"/>
</dbReference>
<dbReference type="RefSeq" id="WP_011634935.1">
    <property type="nucleotide sequence ID" value="NC_008344.1"/>
</dbReference>
<dbReference type="SMR" id="Q0AEU9"/>
<dbReference type="STRING" id="335283.Neut_1901"/>
<dbReference type="KEGG" id="net:Neut_1901"/>
<dbReference type="eggNOG" id="COG0757">
    <property type="taxonomic scope" value="Bacteria"/>
</dbReference>
<dbReference type="HOGENOM" id="CLU_090968_1_0_4"/>
<dbReference type="OrthoDB" id="9790793at2"/>
<dbReference type="UniPathway" id="UPA00053">
    <property type="reaction ID" value="UER00086"/>
</dbReference>
<dbReference type="Proteomes" id="UP000001966">
    <property type="component" value="Chromosome"/>
</dbReference>
<dbReference type="GO" id="GO:0003855">
    <property type="term" value="F:3-dehydroquinate dehydratase activity"/>
    <property type="evidence" value="ECO:0007669"/>
    <property type="project" value="UniProtKB-UniRule"/>
</dbReference>
<dbReference type="GO" id="GO:0008652">
    <property type="term" value="P:amino acid biosynthetic process"/>
    <property type="evidence" value="ECO:0007669"/>
    <property type="project" value="UniProtKB-KW"/>
</dbReference>
<dbReference type="GO" id="GO:0009073">
    <property type="term" value="P:aromatic amino acid family biosynthetic process"/>
    <property type="evidence" value="ECO:0007669"/>
    <property type="project" value="UniProtKB-KW"/>
</dbReference>
<dbReference type="GO" id="GO:0009423">
    <property type="term" value="P:chorismate biosynthetic process"/>
    <property type="evidence" value="ECO:0007669"/>
    <property type="project" value="UniProtKB-UniRule"/>
</dbReference>
<dbReference type="GO" id="GO:0019631">
    <property type="term" value="P:quinate catabolic process"/>
    <property type="evidence" value="ECO:0007669"/>
    <property type="project" value="TreeGrafter"/>
</dbReference>
<dbReference type="CDD" id="cd00466">
    <property type="entry name" value="DHQase_II"/>
    <property type="match status" value="1"/>
</dbReference>
<dbReference type="Gene3D" id="3.40.50.9100">
    <property type="entry name" value="Dehydroquinase, class II"/>
    <property type="match status" value="1"/>
</dbReference>
<dbReference type="HAMAP" id="MF_00169">
    <property type="entry name" value="AroQ"/>
    <property type="match status" value="1"/>
</dbReference>
<dbReference type="InterPro" id="IPR001874">
    <property type="entry name" value="DHquinase_II"/>
</dbReference>
<dbReference type="InterPro" id="IPR018509">
    <property type="entry name" value="DHquinase_II_CS"/>
</dbReference>
<dbReference type="InterPro" id="IPR036441">
    <property type="entry name" value="DHquinase_II_sf"/>
</dbReference>
<dbReference type="NCBIfam" id="TIGR01088">
    <property type="entry name" value="aroQ"/>
    <property type="match status" value="1"/>
</dbReference>
<dbReference type="NCBIfam" id="NF003804">
    <property type="entry name" value="PRK05395.1-1"/>
    <property type="match status" value="1"/>
</dbReference>
<dbReference type="NCBIfam" id="NF003805">
    <property type="entry name" value="PRK05395.1-2"/>
    <property type="match status" value="1"/>
</dbReference>
<dbReference type="NCBIfam" id="NF003806">
    <property type="entry name" value="PRK05395.1-3"/>
    <property type="match status" value="1"/>
</dbReference>
<dbReference type="NCBIfam" id="NF003807">
    <property type="entry name" value="PRK05395.1-4"/>
    <property type="match status" value="1"/>
</dbReference>
<dbReference type="PANTHER" id="PTHR21272">
    <property type="entry name" value="CATABOLIC 3-DEHYDROQUINASE"/>
    <property type="match status" value="1"/>
</dbReference>
<dbReference type="PANTHER" id="PTHR21272:SF3">
    <property type="entry name" value="CATABOLIC 3-DEHYDROQUINASE"/>
    <property type="match status" value="1"/>
</dbReference>
<dbReference type="Pfam" id="PF01220">
    <property type="entry name" value="DHquinase_II"/>
    <property type="match status" value="1"/>
</dbReference>
<dbReference type="PIRSF" id="PIRSF001399">
    <property type="entry name" value="DHquinase_II"/>
    <property type="match status" value="1"/>
</dbReference>
<dbReference type="SUPFAM" id="SSF52304">
    <property type="entry name" value="Type II 3-dehydroquinate dehydratase"/>
    <property type="match status" value="1"/>
</dbReference>
<dbReference type="PROSITE" id="PS01029">
    <property type="entry name" value="DEHYDROQUINASE_II"/>
    <property type="match status" value="1"/>
</dbReference>
<organism>
    <name type="scientific">Nitrosomonas eutropha (strain DSM 101675 / C91 / Nm57)</name>
    <dbReference type="NCBI Taxonomy" id="335283"/>
    <lineage>
        <taxon>Bacteria</taxon>
        <taxon>Pseudomonadati</taxon>
        <taxon>Pseudomonadota</taxon>
        <taxon>Betaproteobacteria</taxon>
        <taxon>Nitrosomonadales</taxon>
        <taxon>Nitrosomonadaceae</taxon>
        <taxon>Nitrosomonas</taxon>
    </lineage>
</organism>